<name>YACG_SHEAM</name>
<proteinExistence type="inferred from homology"/>
<protein>
    <recommendedName>
        <fullName evidence="1">DNA gyrase inhibitor YacG</fullName>
    </recommendedName>
</protein>
<sequence length="71" mass="8041">MTLTVKCPQCQKPVTWDASSAFKPFCSERCKLIDLGDWASEKHAIPVKDDISEELLDQLGYEEADFFKTAD</sequence>
<gene>
    <name evidence="1" type="primary">yacG</name>
    <name type="ordered locus">Sama_0364</name>
</gene>
<dbReference type="EMBL" id="CP000507">
    <property type="protein sequence ID" value="ABL98575.1"/>
    <property type="molecule type" value="Genomic_DNA"/>
</dbReference>
<dbReference type="RefSeq" id="WP_011758485.1">
    <property type="nucleotide sequence ID" value="NC_008700.1"/>
</dbReference>
<dbReference type="SMR" id="A1S2G9"/>
<dbReference type="STRING" id="326297.Sama_0364"/>
<dbReference type="KEGG" id="saz:Sama_0364"/>
<dbReference type="eggNOG" id="COG3024">
    <property type="taxonomic scope" value="Bacteria"/>
</dbReference>
<dbReference type="HOGENOM" id="CLU_178280_1_0_6"/>
<dbReference type="OrthoDB" id="9809663at2"/>
<dbReference type="Proteomes" id="UP000009175">
    <property type="component" value="Chromosome"/>
</dbReference>
<dbReference type="GO" id="GO:0008657">
    <property type="term" value="F:DNA topoisomerase type II (double strand cut, ATP-hydrolyzing) inhibitor activity"/>
    <property type="evidence" value="ECO:0007669"/>
    <property type="project" value="UniProtKB-UniRule"/>
</dbReference>
<dbReference type="GO" id="GO:0008270">
    <property type="term" value="F:zinc ion binding"/>
    <property type="evidence" value="ECO:0007669"/>
    <property type="project" value="UniProtKB-UniRule"/>
</dbReference>
<dbReference type="GO" id="GO:0006355">
    <property type="term" value="P:regulation of DNA-templated transcription"/>
    <property type="evidence" value="ECO:0007669"/>
    <property type="project" value="InterPro"/>
</dbReference>
<dbReference type="Gene3D" id="3.30.50.10">
    <property type="entry name" value="Erythroid Transcription Factor GATA-1, subunit A"/>
    <property type="match status" value="1"/>
</dbReference>
<dbReference type="HAMAP" id="MF_00649">
    <property type="entry name" value="DNA_gyrase_inhibitor_YacG"/>
    <property type="match status" value="1"/>
</dbReference>
<dbReference type="InterPro" id="IPR005584">
    <property type="entry name" value="DNA_gyrase_inhibitor_YacG"/>
</dbReference>
<dbReference type="InterPro" id="IPR013088">
    <property type="entry name" value="Znf_NHR/GATA"/>
</dbReference>
<dbReference type="NCBIfam" id="NF001638">
    <property type="entry name" value="PRK00418.1"/>
    <property type="match status" value="1"/>
</dbReference>
<dbReference type="PANTHER" id="PTHR36150">
    <property type="entry name" value="DNA GYRASE INHIBITOR YACG"/>
    <property type="match status" value="1"/>
</dbReference>
<dbReference type="PANTHER" id="PTHR36150:SF1">
    <property type="entry name" value="DNA GYRASE INHIBITOR YACG"/>
    <property type="match status" value="1"/>
</dbReference>
<dbReference type="Pfam" id="PF03884">
    <property type="entry name" value="YacG"/>
    <property type="match status" value="1"/>
</dbReference>
<dbReference type="SUPFAM" id="SSF57716">
    <property type="entry name" value="Glucocorticoid receptor-like (DNA-binding domain)"/>
    <property type="match status" value="1"/>
</dbReference>
<keyword id="KW-0479">Metal-binding</keyword>
<keyword id="KW-1185">Reference proteome</keyword>
<keyword id="KW-0862">Zinc</keyword>
<comment type="function">
    <text evidence="1">Inhibits all the catalytic activities of DNA gyrase by preventing its interaction with DNA. Acts by binding directly to the C-terminal domain of GyrB, which probably disrupts DNA binding by the gyrase.</text>
</comment>
<comment type="cofactor">
    <cofactor evidence="1">
        <name>Zn(2+)</name>
        <dbReference type="ChEBI" id="CHEBI:29105"/>
    </cofactor>
    <text evidence="1">Binds 1 zinc ion.</text>
</comment>
<comment type="subunit">
    <text evidence="1">Interacts with GyrB.</text>
</comment>
<comment type="similarity">
    <text evidence="1">Belongs to the DNA gyrase inhibitor YacG family.</text>
</comment>
<accession>A1S2G9</accession>
<organism>
    <name type="scientific">Shewanella amazonensis (strain ATCC BAA-1098 / SB2B)</name>
    <dbReference type="NCBI Taxonomy" id="326297"/>
    <lineage>
        <taxon>Bacteria</taxon>
        <taxon>Pseudomonadati</taxon>
        <taxon>Pseudomonadota</taxon>
        <taxon>Gammaproteobacteria</taxon>
        <taxon>Alteromonadales</taxon>
        <taxon>Shewanellaceae</taxon>
        <taxon>Shewanella</taxon>
    </lineage>
</organism>
<reference key="1">
    <citation type="submission" date="2006-12" db="EMBL/GenBank/DDBJ databases">
        <title>Complete sequence of Shewanella amazonensis SB2B.</title>
        <authorList>
            <consortium name="US DOE Joint Genome Institute"/>
            <person name="Copeland A."/>
            <person name="Lucas S."/>
            <person name="Lapidus A."/>
            <person name="Barry K."/>
            <person name="Detter J.C."/>
            <person name="Glavina del Rio T."/>
            <person name="Hammon N."/>
            <person name="Israni S."/>
            <person name="Dalin E."/>
            <person name="Tice H."/>
            <person name="Pitluck S."/>
            <person name="Munk A.C."/>
            <person name="Brettin T."/>
            <person name="Bruce D."/>
            <person name="Han C."/>
            <person name="Tapia R."/>
            <person name="Gilna P."/>
            <person name="Schmutz J."/>
            <person name="Larimer F."/>
            <person name="Land M."/>
            <person name="Hauser L."/>
            <person name="Kyrpides N."/>
            <person name="Mikhailova N."/>
            <person name="Fredrickson J."/>
            <person name="Richardson P."/>
        </authorList>
    </citation>
    <scope>NUCLEOTIDE SEQUENCE [LARGE SCALE GENOMIC DNA]</scope>
    <source>
        <strain>ATCC BAA-1098 / SB2B</strain>
    </source>
</reference>
<evidence type="ECO:0000255" key="1">
    <source>
        <dbReference type="HAMAP-Rule" id="MF_00649"/>
    </source>
</evidence>
<feature type="chain" id="PRO_1000056988" description="DNA gyrase inhibitor YacG">
    <location>
        <begin position="1"/>
        <end position="71"/>
    </location>
</feature>
<feature type="binding site" evidence="1">
    <location>
        <position position="7"/>
    </location>
    <ligand>
        <name>Zn(2+)</name>
        <dbReference type="ChEBI" id="CHEBI:29105"/>
    </ligand>
</feature>
<feature type="binding site" evidence="1">
    <location>
        <position position="10"/>
    </location>
    <ligand>
        <name>Zn(2+)</name>
        <dbReference type="ChEBI" id="CHEBI:29105"/>
    </ligand>
</feature>
<feature type="binding site" evidence="1">
    <location>
        <position position="26"/>
    </location>
    <ligand>
        <name>Zn(2+)</name>
        <dbReference type="ChEBI" id="CHEBI:29105"/>
    </ligand>
</feature>
<feature type="binding site" evidence="1">
    <location>
        <position position="30"/>
    </location>
    <ligand>
        <name>Zn(2+)</name>
        <dbReference type="ChEBI" id="CHEBI:29105"/>
    </ligand>
</feature>